<feature type="chain" id="PRO_0000237085" description="Small ribosomal subunit protein uS10">
    <location>
        <begin position="1"/>
        <end position="102"/>
    </location>
</feature>
<evidence type="ECO:0000255" key="1">
    <source>
        <dbReference type="HAMAP-Rule" id="MF_00508"/>
    </source>
</evidence>
<evidence type="ECO:0000305" key="2"/>
<gene>
    <name evidence="1" type="primary">rpsJ</name>
    <name type="ordered locus">Reut_A3181</name>
</gene>
<organism>
    <name type="scientific">Cupriavidus pinatubonensis (strain JMP 134 / LMG 1197)</name>
    <name type="common">Cupriavidus necator (strain JMP 134)</name>
    <dbReference type="NCBI Taxonomy" id="264198"/>
    <lineage>
        <taxon>Bacteria</taxon>
        <taxon>Pseudomonadati</taxon>
        <taxon>Pseudomonadota</taxon>
        <taxon>Betaproteobacteria</taxon>
        <taxon>Burkholderiales</taxon>
        <taxon>Burkholderiaceae</taxon>
        <taxon>Cupriavidus</taxon>
    </lineage>
</organism>
<accession>Q46WE2</accession>
<reference key="1">
    <citation type="journal article" date="2010" name="PLoS ONE">
        <title>The complete multipartite genome sequence of Cupriavidus necator JMP134, a versatile pollutant degrader.</title>
        <authorList>
            <person name="Lykidis A."/>
            <person name="Perez-Pantoja D."/>
            <person name="Ledger T."/>
            <person name="Mavromatis K."/>
            <person name="Anderson I.J."/>
            <person name="Ivanova N.N."/>
            <person name="Hooper S.D."/>
            <person name="Lapidus A."/>
            <person name="Lucas S."/>
            <person name="Gonzalez B."/>
            <person name="Kyrpides N.C."/>
        </authorList>
    </citation>
    <scope>NUCLEOTIDE SEQUENCE [LARGE SCALE GENOMIC DNA]</scope>
    <source>
        <strain>JMP134 / LMG 1197</strain>
    </source>
</reference>
<name>RS10_CUPPJ</name>
<dbReference type="EMBL" id="CP000090">
    <property type="protein sequence ID" value="AAZ62541.1"/>
    <property type="molecule type" value="Genomic_DNA"/>
</dbReference>
<dbReference type="SMR" id="Q46WE2"/>
<dbReference type="STRING" id="264198.Reut_A3181"/>
<dbReference type="KEGG" id="reu:Reut_A3181"/>
<dbReference type="eggNOG" id="COG0051">
    <property type="taxonomic scope" value="Bacteria"/>
</dbReference>
<dbReference type="HOGENOM" id="CLU_122625_1_3_4"/>
<dbReference type="OrthoDB" id="9804464at2"/>
<dbReference type="GO" id="GO:1990904">
    <property type="term" value="C:ribonucleoprotein complex"/>
    <property type="evidence" value="ECO:0007669"/>
    <property type="project" value="UniProtKB-KW"/>
</dbReference>
<dbReference type="GO" id="GO:0005840">
    <property type="term" value="C:ribosome"/>
    <property type="evidence" value="ECO:0007669"/>
    <property type="project" value="UniProtKB-KW"/>
</dbReference>
<dbReference type="GO" id="GO:0003735">
    <property type="term" value="F:structural constituent of ribosome"/>
    <property type="evidence" value="ECO:0007669"/>
    <property type="project" value="InterPro"/>
</dbReference>
<dbReference type="GO" id="GO:0000049">
    <property type="term" value="F:tRNA binding"/>
    <property type="evidence" value="ECO:0007669"/>
    <property type="project" value="UniProtKB-UniRule"/>
</dbReference>
<dbReference type="GO" id="GO:0006412">
    <property type="term" value="P:translation"/>
    <property type="evidence" value="ECO:0007669"/>
    <property type="project" value="UniProtKB-UniRule"/>
</dbReference>
<dbReference type="FunFam" id="3.30.70.600:FF:000001">
    <property type="entry name" value="30S ribosomal protein S10"/>
    <property type="match status" value="1"/>
</dbReference>
<dbReference type="Gene3D" id="3.30.70.600">
    <property type="entry name" value="Ribosomal protein S10 domain"/>
    <property type="match status" value="1"/>
</dbReference>
<dbReference type="HAMAP" id="MF_00508">
    <property type="entry name" value="Ribosomal_uS10"/>
    <property type="match status" value="1"/>
</dbReference>
<dbReference type="InterPro" id="IPR001848">
    <property type="entry name" value="Ribosomal_uS10"/>
</dbReference>
<dbReference type="InterPro" id="IPR018268">
    <property type="entry name" value="Ribosomal_uS10_CS"/>
</dbReference>
<dbReference type="InterPro" id="IPR027486">
    <property type="entry name" value="Ribosomal_uS10_dom"/>
</dbReference>
<dbReference type="InterPro" id="IPR036838">
    <property type="entry name" value="Ribosomal_uS10_dom_sf"/>
</dbReference>
<dbReference type="NCBIfam" id="NF001861">
    <property type="entry name" value="PRK00596.1"/>
    <property type="match status" value="1"/>
</dbReference>
<dbReference type="NCBIfam" id="TIGR01049">
    <property type="entry name" value="rpsJ_bact"/>
    <property type="match status" value="1"/>
</dbReference>
<dbReference type="PANTHER" id="PTHR11700">
    <property type="entry name" value="30S RIBOSOMAL PROTEIN S10 FAMILY MEMBER"/>
    <property type="match status" value="1"/>
</dbReference>
<dbReference type="Pfam" id="PF00338">
    <property type="entry name" value="Ribosomal_S10"/>
    <property type="match status" value="1"/>
</dbReference>
<dbReference type="PRINTS" id="PR00971">
    <property type="entry name" value="RIBOSOMALS10"/>
</dbReference>
<dbReference type="SMART" id="SM01403">
    <property type="entry name" value="Ribosomal_S10"/>
    <property type="match status" value="1"/>
</dbReference>
<dbReference type="SUPFAM" id="SSF54999">
    <property type="entry name" value="Ribosomal protein S10"/>
    <property type="match status" value="1"/>
</dbReference>
<dbReference type="PROSITE" id="PS00361">
    <property type="entry name" value="RIBOSOMAL_S10"/>
    <property type="match status" value="1"/>
</dbReference>
<keyword id="KW-0687">Ribonucleoprotein</keyword>
<keyword id="KW-0689">Ribosomal protein</keyword>
<protein>
    <recommendedName>
        <fullName evidence="1">Small ribosomal subunit protein uS10</fullName>
    </recommendedName>
    <alternativeName>
        <fullName evidence="2">30S ribosomal protein S10</fullName>
    </alternativeName>
</protein>
<proteinExistence type="inferred from homology"/>
<comment type="function">
    <text evidence="1">Involved in the binding of tRNA to the ribosomes.</text>
</comment>
<comment type="subunit">
    <text evidence="1">Part of the 30S ribosomal subunit.</text>
</comment>
<comment type="similarity">
    <text evidence="1">Belongs to the universal ribosomal protein uS10 family.</text>
</comment>
<sequence length="102" mass="11678">MQNQKIRIRLKAFDYRLIDQSAAEIVDTAKRTGAIVKGPVPLPTRIQRFDILRSPHVNKTSRDQFEIRTHQRLMDIVDPTDKTVDALMKLDLPAGVDVEIKV</sequence>